<protein>
    <recommendedName>
        <fullName evidence="1">GTP cyclohydrolase-2</fullName>
        <ecNumber evidence="1">3.5.4.25</ecNumber>
    </recommendedName>
    <alternativeName>
        <fullName evidence="1">GTP cyclohydrolase II</fullName>
    </alternativeName>
</protein>
<feature type="chain" id="PRO_1000040565" description="GTP cyclohydrolase-2">
    <location>
        <begin position="1"/>
        <end position="216"/>
    </location>
</feature>
<feature type="active site" description="Proton acceptor" evidence="1">
    <location>
        <position position="127"/>
    </location>
</feature>
<feature type="active site" description="Nucleophile" evidence="1">
    <location>
        <position position="129"/>
    </location>
</feature>
<feature type="binding site" evidence="1">
    <location>
        <begin position="50"/>
        <end position="54"/>
    </location>
    <ligand>
        <name>GTP</name>
        <dbReference type="ChEBI" id="CHEBI:37565"/>
    </ligand>
</feature>
<feature type="binding site" evidence="1">
    <location>
        <position position="55"/>
    </location>
    <ligand>
        <name>Zn(2+)</name>
        <dbReference type="ChEBI" id="CHEBI:29105"/>
        <note>catalytic</note>
    </ligand>
</feature>
<feature type="binding site" evidence="1">
    <location>
        <position position="66"/>
    </location>
    <ligand>
        <name>Zn(2+)</name>
        <dbReference type="ChEBI" id="CHEBI:29105"/>
        <note>catalytic</note>
    </ligand>
</feature>
<feature type="binding site" evidence="1">
    <location>
        <position position="68"/>
    </location>
    <ligand>
        <name>Zn(2+)</name>
        <dbReference type="ChEBI" id="CHEBI:29105"/>
        <note>catalytic</note>
    </ligand>
</feature>
<feature type="binding site" evidence="1">
    <location>
        <position position="71"/>
    </location>
    <ligand>
        <name>GTP</name>
        <dbReference type="ChEBI" id="CHEBI:37565"/>
    </ligand>
</feature>
<feature type="binding site" evidence="1">
    <location>
        <begin position="93"/>
        <end position="95"/>
    </location>
    <ligand>
        <name>GTP</name>
        <dbReference type="ChEBI" id="CHEBI:37565"/>
    </ligand>
</feature>
<feature type="binding site" evidence="1">
    <location>
        <position position="115"/>
    </location>
    <ligand>
        <name>GTP</name>
        <dbReference type="ChEBI" id="CHEBI:37565"/>
    </ligand>
</feature>
<feature type="binding site" evidence="1">
    <location>
        <position position="150"/>
    </location>
    <ligand>
        <name>GTP</name>
        <dbReference type="ChEBI" id="CHEBI:37565"/>
    </ligand>
</feature>
<feature type="binding site" evidence="1">
    <location>
        <position position="155"/>
    </location>
    <ligand>
        <name>GTP</name>
        <dbReference type="ChEBI" id="CHEBI:37565"/>
    </ligand>
</feature>
<accession>Q0I4A3</accession>
<comment type="function">
    <text evidence="1">Catalyzes the conversion of GTP to 2,5-diamino-6-ribosylamino-4(3H)-pyrimidinone 5'-phosphate (DARP), formate and pyrophosphate.</text>
</comment>
<comment type="catalytic activity">
    <reaction evidence="1">
        <text>GTP + 4 H2O = 2,5-diamino-6-hydroxy-4-(5-phosphoribosylamino)-pyrimidine + formate + 2 phosphate + 3 H(+)</text>
        <dbReference type="Rhea" id="RHEA:23704"/>
        <dbReference type="ChEBI" id="CHEBI:15377"/>
        <dbReference type="ChEBI" id="CHEBI:15378"/>
        <dbReference type="ChEBI" id="CHEBI:15740"/>
        <dbReference type="ChEBI" id="CHEBI:37565"/>
        <dbReference type="ChEBI" id="CHEBI:43474"/>
        <dbReference type="ChEBI" id="CHEBI:58614"/>
        <dbReference type="EC" id="3.5.4.25"/>
    </reaction>
</comment>
<comment type="cofactor">
    <cofactor evidence="1">
        <name>Zn(2+)</name>
        <dbReference type="ChEBI" id="CHEBI:29105"/>
    </cofactor>
    <text evidence="1">Binds 1 zinc ion per subunit.</text>
</comment>
<comment type="pathway">
    <text evidence="1">Cofactor biosynthesis; riboflavin biosynthesis; 5-amino-6-(D-ribitylamino)uracil from GTP: step 1/4.</text>
</comment>
<comment type="similarity">
    <text evidence="1">Belongs to the GTP cyclohydrolase II family.</text>
</comment>
<sequence length="216" mass="24094">MSKIQLVAEAKLPTEFGIFRIVGFEFPDTQKEHVALVMGDINDDKPVLARIHSECLTGDALHSLKCDCGFQLATALRQISEAGRGVLIYHREEGRGIGLINKIRAYALQDQGLDTIEANLALGFAADERNFSVCADIFALLGVKQVRLLTNNPNKIETMKKSGINIVERVPLNVGENRYNTEYLDTKAKKMGHFIVHNNEQHLIACPHCQEEIPKK</sequence>
<dbReference type="EC" id="3.5.4.25" evidence="1"/>
<dbReference type="EMBL" id="CP000436">
    <property type="protein sequence ID" value="ABI25318.1"/>
    <property type="molecule type" value="Genomic_DNA"/>
</dbReference>
<dbReference type="SMR" id="Q0I4A3"/>
<dbReference type="KEGG" id="hso:HS_1043"/>
<dbReference type="eggNOG" id="COG0807">
    <property type="taxonomic scope" value="Bacteria"/>
</dbReference>
<dbReference type="HOGENOM" id="CLU_020273_2_1_6"/>
<dbReference type="UniPathway" id="UPA00275">
    <property type="reaction ID" value="UER00400"/>
</dbReference>
<dbReference type="GO" id="GO:0005829">
    <property type="term" value="C:cytosol"/>
    <property type="evidence" value="ECO:0007669"/>
    <property type="project" value="TreeGrafter"/>
</dbReference>
<dbReference type="GO" id="GO:0005525">
    <property type="term" value="F:GTP binding"/>
    <property type="evidence" value="ECO:0007669"/>
    <property type="project" value="UniProtKB-KW"/>
</dbReference>
<dbReference type="GO" id="GO:0003935">
    <property type="term" value="F:GTP cyclohydrolase II activity"/>
    <property type="evidence" value="ECO:0007669"/>
    <property type="project" value="UniProtKB-UniRule"/>
</dbReference>
<dbReference type="GO" id="GO:0008270">
    <property type="term" value="F:zinc ion binding"/>
    <property type="evidence" value="ECO:0007669"/>
    <property type="project" value="UniProtKB-UniRule"/>
</dbReference>
<dbReference type="GO" id="GO:0009231">
    <property type="term" value="P:riboflavin biosynthetic process"/>
    <property type="evidence" value="ECO:0007669"/>
    <property type="project" value="UniProtKB-UniRule"/>
</dbReference>
<dbReference type="CDD" id="cd00641">
    <property type="entry name" value="GTP_cyclohydro2"/>
    <property type="match status" value="1"/>
</dbReference>
<dbReference type="FunFam" id="3.40.50.10990:FF:000002">
    <property type="entry name" value="GTP cyclohydrolase-2"/>
    <property type="match status" value="1"/>
</dbReference>
<dbReference type="Gene3D" id="3.40.50.10990">
    <property type="entry name" value="GTP cyclohydrolase II"/>
    <property type="match status" value="1"/>
</dbReference>
<dbReference type="HAMAP" id="MF_00179">
    <property type="entry name" value="RibA"/>
    <property type="match status" value="1"/>
</dbReference>
<dbReference type="InterPro" id="IPR032677">
    <property type="entry name" value="GTP_cyclohydro_II"/>
</dbReference>
<dbReference type="InterPro" id="IPR000926">
    <property type="entry name" value="RibA"/>
</dbReference>
<dbReference type="InterPro" id="IPR036144">
    <property type="entry name" value="RibA-like_sf"/>
</dbReference>
<dbReference type="NCBIfam" id="NF001591">
    <property type="entry name" value="PRK00393.1"/>
    <property type="match status" value="1"/>
</dbReference>
<dbReference type="NCBIfam" id="TIGR00505">
    <property type="entry name" value="ribA"/>
    <property type="match status" value="1"/>
</dbReference>
<dbReference type="PANTHER" id="PTHR21327:SF18">
    <property type="entry name" value="3,4-DIHYDROXY-2-BUTANONE 4-PHOSPHATE SYNTHASE"/>
    <property type="match status" value="1"/>
</dbReference>
<dbReference type="PANTHER" id="PTHR21327">
    <property type="entry name" value="GTP CYCLOHYDROLASE II-RELATED"/>
    <property type="match status" value="1"/>
</dbReference>
<dbReference type="Pfam" id="PF00925">
    <property type="entry name" value="GTP_cyclohydro2"/>
    <property type="match status" value="1"/>
</dbReference>
<dbReference type="SUPFAM" id="SSF142695">
    <property type="entry name" value="RibA-like"/>
    <property type="match status" value="1"/>
</dbReference>
<reference key="1">
    <citation type="journal article" date="2007" name="J. Bacteriol.">
        <title>Complete genome sequence of Haemophilus somnus (Histophilus somni) strain 129Pt and comparison to Haemophilus ducreyi 35000HP and Haemophilus influenzae Rd.</title>
        <authorList>
            <person name="Challacombe J.F."/>
            <person name="Duncan A.J."/>
            <person name="Brettin T.S."/>
            <person name="Bruce D."/>
            <person name="Chertkov O."/>
            <person name="Detter J.C."/>
            <person name="Han C.S."/>
            <person name="Misra M."/>
            <person name="Richardson P."/>
            <person name="Tapia R."/>
            <person name="Thayer N."/>
            <person name="Xie G."/>
            <person name="Inzana T.J."/>
        </authorList>
    </citation>
    <scope>NUCLEOTIDE SEQUENCE [LARGE SCALE GENOMIC DNA]</scope>
    <source>
        <strain>129Pt</strain>
    </source>
</reference>
<proteinExistence type="inferred from homology"/>
<organism>
    <name type="scientific">Histophilus somni (strain 129Pt)</name>
    <name type="common">Haemophilus somnus</name>
    <dbReference type="NCBI Taxonomy" id="205914"/>
    <lineage>
        <taxon>Bacteria</taxon>
        <taxon>Pseudomonadati</taxon>
        <taxon>Pseudomonadota</taxon>
        <taxon>Gammaproteobacteria</taxon>
        <taxon>Pasteurellales</taxon>
        <taxon>Pasteurellaceae</taxon>
        <taxon>Histophilus</taxon>
    </lineage>
</organism>
<keyword id="KW-0342">GTP-binding</keyword>
<keyword id="KW-0378">Hydrolase</keyword>
<keyword id="KW-0479">Metal-binding</keyword>
<keyword id="KW-0547">Nucleotide-binding</keyword>
<keyword id="KW-0686">Riboflavin biosynthesis</keyword>
<keyword id="KW-0862">Zinc</keyword>
<name>RIBA_HISS1</name>
<gene>
    <name evidence="1" type="primary">ribA</name>
    <name type="ordered locus">HS_1043</name>
</gene>
<evidence type="ECO:0000255" key="1">
    <source>
        <dbReference type="HAMAP-Rule" id="MF_00179"/>
    </source>
</evidence>